<organism>
    <name type="scientific">Anaeromyxobacter dehalogenans (strain 2CP-1 / ATCC BAA-258)</name>
    <dbReference type="NCBI Taxonomy" id="455488"/>
    <lineage>
        <taxon>Bacteria</taxon>
        <taxon>Pseudomonadati</taxon>
        <taxon>Myxococcota</taxon>
        <taxon>Myxococcia</taxon>
        <taxon>Myxococcales</taxon>
        <taxon>Cystobacterineae</taxon>
        <taxon>Anaeromyxobacteraceae</taxon>
        <taxon>Anaeromyxobacter</taxon>
    </lineage>
</organism>
<proteinExistence type="inferred from homology"/>
<dbReference type="EMBL" id="CP001359">
    <property type="protein sequence ID" value="ACL65369.1"/>
    <property type="molecule type" value="Genomic_DNA"/>
</dbReference>
<dbReference type="RefSeq" id="WP_011420990.1">
    <property type="nucleotide sequence ID" value="NC_011891.1"/>
</dbReference>
<dbReference type="SMR" id="B8J870"/>
<dbReference type="KEGG" id="acp:A2cp1_2028"/>
<dbReference type="HOGENOM" id="CLU_095071_2_1_7"/>
<dbReference type="Proteomes" id="UP000007089">
    <property type="component" value="Chromosome"/>
</dbReference>
<dbReference type="GO" id="GO:0022625">
    <property type="term" value="C:cytosolic large ribosomal subunit"/>
    <property type="evidence" value="ECO:0007669"/>
    <property type="project" value="TreeGrafter"/>
</dbReference>
<dbReference type="GO" id="GO:0070180">
    <property type="term" value="F:large ribosomal subunit rRNA binding"/>
    <property type="evidence" value="ECO:0007669"/>
    <property type="project" value="TreeGrafter"/>
</dbReference>
<dbReference type="GO" id="GO:0003735">
    <property type="term" value="F:structural constituent of ribosome"/>
    <property type="evidence" value="ECO:0007669"/>
    <property type="project" value="InterPro"/>
</dbReference>
<dbReference type="GO" id="GO:0006412">
    <property type="term" value="P:translation"/>
    <property type="evidence" value="ECO:0007669"/>
    <property type="project" value="UniProtKB-UniRule"/>
</dbReference>
<dbReference type="CDD" id="cd00337">
    <property type="entry name" value="Ribosomal_uL14"/>
    <property type="match status" value="1"/>
</dbReference>
<dbReference type="FunFam" id="2.40.150.20:FF:000001">
    <property type="entry name" value="50S ribosomal protein L14"/>
    <property type="match status" value="1"/>
</dbReference>
<dbReference type="Gene3D" id="2.40.150.20">
    <property type="entry name" value="Ribosomal protein L14"/>
    <property type="match status" value="1"/>
</dbReference>
<dbReference type="HAMAP" id="MF_01367">
    <property type="entry name" value="Ribosomal_uL14"/>
    <property type="match status" value="1"/>
</dbReference>
<dbReference type="InterPro" id="IPR000218">
    <property type="entry name" value="Ribosomal_uL14"/>
</dbReference>
<dbReference type="InterPro" id="IPR005745">
    <property type="entry name" value="Ribosomal_uL14_bac-type"/>
</dbReference>
<dbReference type="InterPro" id="IPR019972">
    <property type="entry name" value="Ribosomal_uL14_CS"/>
</dbReference>
<dbReference type="InterPro" id="IPR036853">
    <property type="entry name" value="Ribosomal_uL14_sf"/>
</dbReference>
<dbReference type="NCBIfam" id="TIGR01067">
    <property type="entry name" value="rplN_bact"/>
    <property type="match status" value="1"/>
</dbReference>
<dbReference type="PANTHER" id="PTHR11761">
    <property type="entry name" value="50S/60S RIBOSOMAL PROTEIN L14/L23"/>
    <property type="match status" value="1"/>
</dbReference>
<dbReference type="PANTHER" id="PTHR11761:SF3">
    <property type="entry name" value="LARGE RIBOSOMAL SUBUNIT PROTEIN UL14M"/>
    <property type="match status" value="1"/>
</dbReference>
<dbReference type="Pfam" id="PF00238">
    <property type="entry name" value="Ribosomal_L14"/>
    <property type="match status" value="1"/>
</dbReference>
<dbReference type="SMART" id="SM01374">
    <property type="entry name" value="Ribosomal_L14"/>
    <property type="match status" value="1"/>
</dbReference>
<dbReference type="SUPFAM" id="SSF50193">
    <property type="entry name" value="Ribosomal protein L14"/>
    <property type="match status" value="1"/>
</dbReference>
<dbReference type="PROSITE" id="PS00049">
    <property type="entry name" value="RIBOSOMAL_L14"/>
    <property type="match status" value="1"/>
</dbReference>
<feature type="chain" id="PRO_1000166891" description="Large ribosomal subunit protein uL14">
    <location>
        <begin position="1"/>
        <end position="122"/>
    </location>
</feature>
<evidence type="ECO:0000255" key="1">
    <source>
        <dbReference type="HAMAP-Rule" id="MF_01367"/>
    </source>
</evidence>
<evidence type="ECO:0000305" key="2"/>
<accession>B8J870</accession>
<sequence>MIQQQTMLDVADNSGAKRVMCIKVLGGTRRKYASIGDVIVVSIKEAIPQAKVKKGEVARAVIVRTAREVKRPDGSYIRFDGNSAVLINKDLEPIGTRIFGPVARELRARKFMKIISLAPEVL</sequence>
<reference key="1">
    <citation type="submission" date="2009-01" db="EMBL/GenBank/DDBJ databases">
        <title>Complete sequence of Anaeromyxobacter dehalogenans 2CP-1.</title>
        <authorList>
            <person name="Lucas S."/>
            <person name="Copeland A."/>
            <person name="Lapidus A."/>
            <person name="Glavina del Rio T."/>
            <person name="Dalin E."/>
            <person name="Tice H."/>
            <person name="Bruce D."/>
            <person name="Goodwin L."/>
            <person name="Pitluck S."/>
            <person name="Saunders E."/>
            <person name="Brettin T."/>
            <person name="Detter J.C."/>
            <person name="Han C."/>
            <person name="Larimer F."/>
            <person name="Land M."/>
            <person name="Hauser L."/>
            <person name="Kyrpides N."/>
            <person name="Ovchinnikova G."/>
            <person name="Beliaev A.S."/>
            <person name="Richardson P."/>
        </authorList>
    </citation>
    <scope>NUCLEOTIDE SEQUENCE [LARGE SCALE GENOMIC DNA]</scope>
    <source>
        <strain>2CP-1 / ATCC BAA-258</strain>
    </source>
</reference>
<gene>
    <name evidence="1" type="primary">rplN</name>
    <name type="ordered locus">A2cp1_2028</name>
</gene>
<name>RL14_ANAD2</name>
<keyword id="KW-0687">Ribonucleoprotein</keyword>
<keyword id="KW-0689">Ribosomal protein</keyword>
<keyword id="KW-0694">RNA-binding</keyword>
<keyword id="KW-0699">rRNA-binding</keyword>
<comment type="function">
    <text evidence="1">Binds to 23S rRNA. Forms part of two intersubunit bridges in the 70S ribosome.</text>
</comment>
<comment type="subunit">
    <text evidence="1">Part of the 50S ribosomal subunit. Forms a cluster with proteins L3 and L19. In the 70S ribosome, L14 and L19 interact and together make contacts with the 16S rRNA in bridges B5 and B8.</text>
</comment>
<comment type="similarity">
    <text evidence="1">Belongs to the universal ribosomal protein uL14 family.</text>
</comment>
<protein>
    <recommendedName>
        <fullName evidence="1">Large ribosomal subunit protein uL14</fullName>
    </recommendedName>
    <alternativeName>
        <fullName evidence="2">50S ribosomal protein L14</fullName>
    </alternativeName>
</protein>